<proteinExistence type="evidence at protein level"/>
<dbReference type="EC" id="3.5.1.-" evidence="5"/>
<dbReference type="EMBL" id="AE005174">
    <property type="protein sequence ID" value="AAG58267.1"/>
    <property type="molecule type" value="Genomic_DNA"/>
</dbReference>
<dbReference type="PIR" id="G85975">
    <property type="entry name" value="G85975"/>
</dbReference>
<dbReference type="PIR" id="G91130">
    <property type="entry name" value="G91130"/>
</dbReference>
<dbReference type="SMR" id="Q8XAC3"/>
<dbReference type="STRING" id="386585.gene:10367084"/>
<dbReference type="KEGG" id="ece:Z4489"/>
<dbReference type="PATRIC" id="fig|83334.175.peg.701"/>
<dbReference type="eggNOG" id="COG1820">
    <property type="taxonomic scope" value="Bacteria"/>
</dbReference>
<dbReference type="OMA" id="YMKNPRL"/>
<dbReference type="BioCyc" id="MetaCyc:MONOMER-18273"/>
<dbReference type="Proteomes" id="UP000002519">
    <property type="component" value="Chromosome"/>
</dbReference>
<dbReference type="GO" id="GO:0046872">
    <property type="term" value="F:metal ion binding"/>
    <property type="evidence" value="ECO:0007669"/>
    <property type="project" value="UniProtKB-KW"/>
</dbReference>
<dbReference type="GO" id="GO:0047419">
    <property type="term" value="F:N-acetylgalactosamine-6-phosphate deacetylase activity"/>
    <property type="evidence" value="ECO:0007669"/>
    <property type="project" value="RHEA"/>
</dbReference>
<dbReference type="GO" id="GO:0008448">
    <property type="term" value="F:N-acetylglucosamine-6-phosphate deacetylase activity"/>
    <property type="evidence" value="ECO:0007669"/>
    <property type="project" value="InterPro"/>
</dbReference>
<dbReference type="GO" id="GO:0006046">
    <property type="term" value="P:N-acetylglucosamine catabolic process"/>
    <property type="evidence" value="ECO:0007669"/>
    <property type="project" value="TreeGrafter"/>
</dbReference>
<dbReference type="CDD" id="cd00854">
    <property type="entry name" value="NagA"/>
    <property type="match status" value="1"/>
</dbReference>
<dbReference type="FunFam" id="3.20.20.140:FF:000004">
    <property type="entry name" value="N-acetylglucosamine-6-phosphate deacetylase"/>
    <property type="match status" value="1"/>
</dbReference>
<dbReference type="Gene3D" id="3.20.20.140">
    <property type="entry name" value="Metal-dependent hydrolases"/>
    <property type="match status" value="1"/>
</dbReference>
<dbReference type="Gene3D" id="2.30.40.10">
    <property type="entry name" value="Urease, subunit C, domain 1"/>
    <property type="match status" value="1"/>
</dbReference>
<dbReference type="InterPro" id="IPR006680">
    <property type="entry name" value="Amidohydro-rel"/>
</dbReference>
<dbReference type="InterPro" id="IPR003764">
    <property type="entry name" value="GlcNAc_6-P_deAcase"/>
</dbReference>
<dbReference type="InterPro" id="IPR055156">
    <property type="entry name" value="HutF-like_N"/>
</dbReference>
<dbReference type="InterPro" id="IPR011059">
    <property type="entry name" value="Metal-dep_hydrolase_composite"/>
</dbReference>
<dbReference type="InterPro" id="IPR032466">
    <property type="entry name" value="Metal_Hydrolase"/>
</dbReference>
<dbReference type="NCBIfam" id="TIGR00221">
    <property type="entry name" value="nagA"/>
    <property type="match status" value="1"/>
</dbReference>
<dbReference type="PANTHER" id="PTHR11113">
    <property type="entry name" value="N-ACETYLGLUCOSAMINE-6-PHOSPHATE DEACETYLASE"/>
    <property type="match status" value="1"/>
</dbReference>
<dbReference type="PANTHER" id="PTHR11113:SF14">
    <property type="entry name" value="N-ACETYLGLUCOSAMINE-6-PHOSPHATE DEACETYLASE"/>
    <property type="match status" value="1"/>
</dbReference>
<dbReference type="Pfam" id="PF01979">
    <property type="entry name" value="Amidohydro_1"/>
    <property type="match status" value="1"/>
</dbReference>
<dbReference type="Pfam" id="PF22429">
    <property type="entry name" value="HutF_N"/>
    <property type="match status" value="1"/>
</dbReference>
<dbReference type="PIRSF" id="PIRSF038994">
    <property type="entry name" value="NagA"/>
    <property type="match status" value="1"/>
</dbReference>
<dbReference type="SUPFAM" id="SSF51338">
    <property type="entry name" value="Composite domain of metallo-dependent hydrolases"/>
    <property type="match status" value="1"/>
</dbReference>
<dbReference type="SUPFAM" id="SSF51556">
    <property type="entry name" value="Metallo-dependent hydrolases"/>
    <property type="match status" value="1"/>
</dbReference>
<keyword id="KW-0119">Carbohydrate metabolism</keyword>
<keyword id="KW-0378">Hydrolase</keyword>
<keyword id="KW-0479">Metal-binding</keyword>
<evidence type="ECO:0000250" key="1">
    <source>
        <dbReference type="UniProtKB" id="P0AF18"/>
    </source>
</evidence>
<evidence type="ECO:0000269" key="2">
    <source>
    </source>
</evidence>
<evidence type="ECO:0000303" key="3">
    <source>
    </source>
</evidence>
<evidence type="ECO:0000305" key="4"/>
<evidence type="ECO:0000305" key="5">
    <source>
    </source>
</evidence>
<evidence type="ECO:0000312" key="6">
    <source>
        <dbReference type="EMBL" id="AAG58267.1"/>
    </source>
</evidence>
<sequence>MTHVLRARRLLTEEGWLDDHQLRIADGVIAAIEPIPVSVTERDAELLCPAYIDTHVHGGAGVDVMDDAPDVLDKLAMHKAREGVGSWLPTTVTAPLSTIHAALKRIAQRCQRGGPGAQVLGSYLEGPYFTPQNKGAHPPELFRELEIAELDQLIAVSQHTLRVVALAPEKEGALQAIRHLKQQNVRVMLGHSAATWQQTRAAFDAGADGLVHCYNGMTGLHHREPGMVGAGLTDKRAWLELIADGHHVHPAAMSLCCCCAKERIVLITDAMQAAGMPDGRYTLCGEEVQMHGGVVRTASGGLAGSTLSVDAAVRNMVELTGVTPAEAIHMASLHPARMLGVDGVLGSLKPGKRASVVALDSGLHVQQIWIQGQLASF</sequence>
<name>AGAA_ECO57</name>
<accession>Q8XAC3</accession>
<gene>
    <name type="primary">agaA</name>
    <name evidence="6" type="ordered locus">Z4489</name>
</gene>
<comment type="function">
    <text evidence="5">Catalyzes the deacetylation of N-acetyl-D-galactosamine 6-phosphate to D-galactosamine 6-phosphate. Can probably also catalyze the deacetylation of N-acetyl-D-glucosamine 6-phosphate to D-glucosamine 6-phosphate.</text>
</comment>
<comment type="catalytic activity">
    <reaction evidence="5">
        <text>N-acetyl-D-galactosamine 6-phosphate + H2O = D-galactosamine 6-phosphate + acetate</text>
        <dbReference type="Rhea" id="RHEA:18149"/>
        <dbReference type="ChEBI" id="CHEBI:15377"/>
        <dbReference type="ChEBI" id="CHEBI:30089"/>
        <dbReference type="ChEBI" id="CHEBI:71673"/>
        <dbReference type="ChEBI" id="CHEBI:71674"/>
    </reaction>
</comment>
<comment type="cofactor">
    <cofactor evidence="1">
        <name>a divalent metal cation</name>
        <dbReference type="ChEBI" id="CHEBI:60240"/>
    </cofactor>
    <text evidence="1">Binds 1 divalent metal cation per subunit.</text>
</comment>
<comment type="induction">
    <text evidence="2">Induced by growth on N-acetyl-D-galactosamine but not by growth on N-acetyl-D-glucosamine.</text>
</comment>
<comment type="disruption phenotype">
    <text evidence="2">AgaA deletion mutant, but not agaA-nagA double mutant, can grow on N-acetyl-D-galactosamine. AgaA deletion mutant is probably able to grow on N-acetyl-D-galactosamine because NagA can substitute for the absence of AgaA. Deletion of agaA does not affect N-acetyl-D-glucosamine utilization.</text>
</comment>
<comment type="miscellaneous">
    <text evidence="2">NagA and AgaA can substitute for each other and function in both the N-acetyl-D-glucosamine and N-acetyl-D-galactosamine pathways.</text>
</comment>
<comment type="similarity">
    <text evidence="4">Belongs to the metallo-dependent hydrolases superfamily. NagA family.</text>
</comment>
<feature type="chain" id="PRO_0000441910" description="N-acetylgalactosamine-6-phosphate deacetylase">
    <location>
        <begin position="1"/>
        <end position="377"/>
    </location>
</feature>
<feature type="active site" description="Proton donor/acceptor" evidence="1">
    <location>
        <position position="269"/>
    </location>
</feature>
<feature type="binding site" evidence="1">
    <location>
        <position position="125"/>
    </location>
    <ligand>
        <name>a divalent metal cation</name>
        <dbReference type="ChEBI" id="CHEBI:60240"/>
    </ligand>
</feature>
<feature type="binding site" evidence="1">
    <location>
        <begin position="136"/>
        <end position="137"/>
    </location>
    <ligand>
        <name>substrate</name>
    </ligand>
</feature>
<feature type="binding site" evidence="1">
    <location>
        <position position="191"/>
    </location>
    <ligand>
        <name>a divalent metal cation</name>
        <dbReference type="ChEBI" id="CHEBI:60240"/>
    </ligand>
</feature>
<feature type="binding site" evidence="1">
    <location>
        <position position="212"/>
    </location>
    <ligand>
        <name>a divalent metal cation</name>
        <dbReference type="ChEBI" id="CHEBI:60240"/>
    </ligand>
</feature>
<feature type="binding site" evidence="1">
    <location>
        <begin position="215"/>
        <end position="216"/>
    </location>
    <ligand>
        <name>substrate</name>
    </ligand>
</feature>
<feature type="binding site" evidence="1">
    <location>
        <position position="223"/>
    </location>
    <ligand>
        <name>substrate</name>
    </ligand>
</feature>
<feature type="binding site" evidence="1">
    <location>
        <begin position="244"/>
        <end position="247"/>
    </location>
    <ligand>
        <name>substrate</name>
    </ligand>
</feature>
<feature type="binding site" evidence="1">
    <location>
        <begin position="302"/>
        <end position="304"/>
    </location>
    <ligand>
        <name>substrate</name>
    </ligand>
</feature>
<reference key="1">
    <citation type="journal article" date="2001" name="Nature">
        <title>Genome sequence of enterohaemorrhagic Escherichia coli O157:H7.</title>
        <authorList>
            <person name="Perna N.T."/>
            <person name="Plunkett G. III"/>
            <person name="Burland V."/>
            <person name="Mau B."/>
            <person name="Glasner J.D."/>
            <person name="Rose D.J."/>
            <person name="Mayhew G.F."/>
            <person name="Evans P.S."/>
            <person name="Gregor J."/>
            <person name="Kirkpatrick H.A."/>
            <person name="Posfai G."/>
            <person name="Hackett J."/>
            <person name="Klink S."/>
            <person name="Boutin A."/>
            <person name="Shao Y."/>
            <person name="Miller L."/>
            <person name="Grotbeck E.J."/>
            <person name="Davis N.W."/>
            <person name="Lim A."/>
            <person name="Dimalanta E.T."/>
            <person name="Potamousis K."/>
            <person name="Apodaca J."/>
            <person name="Anantharaman T.S."/>
            <person name="Lin J."/>
            <person name="Yen G."/>
            <person name="Schwartz D.C."/>
            <person name="Welch R.A."/>
            <person name="Blattner F.R."/>
        </authorList>
    </citation>
    <scope>NUCLEOTIDE SEQUENCE [LARGE SCALE GENOMIC DNA]</scope>
    <source>
        <strain>O157:H7 / EDL933 / ATCC 700927 / EHEC</strain>
    </source>
</reference>
<reference key="2">
    <citation type="journal article" date="2013" name="BMC Microbiol.">
        <title>Genetic analysis of the roles of agaA, agaI, and agaS genes in the N-acetyl-D-galactosamine and D-galactosamine catabolic pathways in Escherichia coli strains O157:H7 and C.</title>
        <authorList>
            <person name="Hu Z."/>
            <person name="Patel I.R."/>
            <person name="Mukherjee A."/>
        </authorList>
    </citation>
    <scope>FUNCTION</scope>
    <scope>CATALYTIC ACTIVITY</scope>
    <scope>INDUCTION</scope>
    <scope>DISRUPTION PHENOTYPE</scope>
    <source>
        <strain>O157:H7 / EDL933 / ATCC 700927 / EHEC</strain>
    </source>
</reference>
<protein>
    <recommendedName>
        <fullName evidence="4">N-acetylgalactosamine-6-phosphate deacetylase</fullName>
        <shortName evidence="3">Aga-6-P deacetylase</shortName>
        <ecNumber evidence="5">3.5.1.-</ecNumber>
    </recommendedName>
</protein>
<organism>
    <name type="scientific">Escherichia coli O157:H7</name>
    <dbReference type="NCBI Taxonomy" id="83334"/>
    <lineage>
        <taxon>Bacteria</taxon>
        <taxon>Pseudomonadati</taxon>
        <taxon>Pseudomonadota</taxon>
        <taxon>Gammaproteobacteria</taxon>
        <taxon>Enterobacterales</taxon>
        <taxon>Enterobacteriaceae</taxon>
        <taxon>Escherichia</taxon>
    </lineage>
</organism>